<comment type="similarity">
    <text evidence="2">Belongs to the NTE family.</text>
</comment>
<reference key="1">
    <citation type="journal article" date="1998" name="Nature">
        <title>Deciphering the biology of Mycobacterium tuberculosis from the complete genome sequence.</title>
        <authorList>
            <person name="Cole S.T."/>
            <person name="Brosch R."/>
            <person name="Parkhill J."/>
            <person name="Garnier T."/>
            <person name="Churcher C.M."/>
            <person name="Harris D.E."/>
            <person name="Gordon S.V."/>
            <person name="Eiglmeier K."/>
            <person name="Gas S."/>
            <person name="Barry C.E. III"/>
            <person name="Tekaia F."/>
            <person name="Badcock K."/>
            <person name="Basham D."/>
            <person name="Brown D."/>
            <person name="Chillingworth T."/>
            <person name="Connor R."/>
            <person name="Davies R.M."/>
            <person name="Devlin K."/>
            <person name="Feltwell T."/>
            <person name="Gentles S."/>
            <person name="Hamlin N."/>
            <person name="Holroyd S."/>
            <person name="Hornsby T."/>
            <person name="Jagels K."/>
            <person name="Krogh A."/>
            <person name="McLean J."/>
            <person name="Moule S."/>
            <person name="Murphy L.D."/>
            <person name="Oliver S."/>
            <person name="Osborne J."/>
            <person name="Quail M.A."/>
            <person name="Rajandream M.A."/>
            <person name="Rogers J."/>
            <person name="Rutter S."/>
            <person name="Seeger K."/>
            <person name="Skelton S."/>
            <person name="Squares S."/>
            <person name="Squares R."/>
            <person name="Sulston J.E."/>
            <person name="Taylor K."/>
            <person name="Whitehead S."/>
            <person name="Barrell B.G."/>
        </authorList>
    </citation>
    <scope>NUCLEOTIDE SEQUENCE [LARGE SCALE GENOMIC DNA]</scope>
    <source>
        <strain>ATCC 25618 / H37Rv</strain>
    </source>
</reference>
<reference key="2">
    <citation type="journal article" date="2011" name="Mol. Cell. Proteomics">
        <title>Proteogenomic analysis of Mycobacterium tuberculosis by high resolution mass spectrometry.</title>
        <authorList>
            <person name="Kelkar D.S."/>
            <person name="Kumar D."/>
            <person name="Kumar P."/>
            <person name="Balakrishnan L."/>
            <person name="Muthusamy B."/>
            <person name="Yadav A.K."/>
            <person name="Shrivastava P."/>
            <person name="Marimuthu A."/>
            <person name="Anand S."/>
            <person name="Sundaram H."/>
            <person name="Kingsbury R."/>
            <person name="Harsha H.C."/>
            <person name="Nair B."/>
            <person name="Prasad T.S."/>
            <person name="Chauhan D.S."/>
            <person name="Katoch K."/>
            <person name="Katoch V.M."/>
            <person name="Kumar P."/>
            <person name="Chaerkady R."/>
            <person name="Ramachandran S."/>
            <person name="Dash D."/>
            <person name="Pandey A."/>
        </authorList>
    </citation>
    <scope>IDENTIFICATION BY MASS SPECTROMETRY [LARGE SCALE ANALYSIS]</scope>
    <source>
        <strain>ATCC 25618 / H37Rv</strain>
    </source>
</reference>
<keyword id="KW-0378">Hydrolase</keyword>
<keyword id="KW-0442">Lipid degradation</keyword>
<keyword id="KW-0443">Lipid metabolism</keyword>
<keyword id="KW-1185">Reference proteome</keyword>
<name>Y2565_MYCTU</name>
<sequence length="583" mass="62124">MTTARRRPKRRGTDARTALRNVPILADIDDEQLERLATTVERRHVPANQWLFHAGEPADSIYIVDSGRFVAVAPEGHVFAEMASGDSIGDLGVIAGAARSAGVRALRDGVVWRIAAETFTDMLEATPLLQSAMLRAMARMLRQSRPAKTARRPRVIGVVSNGDTAAAPMVDAIATSLDSHGRTAVIAPPVETTSAVQEYDELVEAFSETLDRAERSNDWVLVVADRGAGDLWRHYVSAQSDRLVVLVDQRYPPDAVDSLATQRPVHLITCLAEPDPSWWDRLAPVSHHPANSDGFGALARRIAGRSLGLVMAGGGARGLAHFGVYQELTEAGVVIDRFGGTSSGAIASAAFALGMDAGDAIAAAREFIAGSDPLGDYTIPISALTRGGRVDRLVQGFFGNTLIEHLPRGFFSVSADMITGDQIIHRRGSVSGAVRASISIPGLIPPVHNGEQLLVDGGLLNNLPANVMCADTDGEVICVDLRRTFVPSKGFGLLPPIVTPPGLLRRLLTGTDNALPPLQETLLRAFDLAASTANLRELPRVAAIIEPDVSKIGVLNFKQIDAALEAGRMAARAALQAQPDLVR</sequence>
<protein>
    <recommendedName>
        <fullName>Uncharacterized NTE family protein Rv2565</fullName>
    </recommendedName>
</protein>
<accession>P9WIY7</accession>
<accession>L0TA62</accession>
<accession>P0A642</accession>
<accession>Q50733</accession>
<proteinExistence type="evidence at protein level"/>
<evidence type="ECO:0000255" key="1">
    <source>
        <dbReference type="PROSITE-ProRule" id="PRU01161"/>
    </source>
</evidence>
<evidence type="ECO:0000305" key="2"/>
<organism>
    <name type="scientific">Mycobacterium tuberculosis (strain ATCC 25618 / H37Rv)</name>
    <dbReference type="NCBI Taxonomy" id="83332"/>
    <lineage>
        <taxon>Bacteria</taxon>
        <taxon>Bacillati</taxon>
        <taxon>Actinomycetota</taxon>
        <taxon>Actinomycetes</taxon>
        <taxon>Mycobacteriales</taxon>
        <taxon>Mycobacteriaceae</taxon>
        <taxon>Mycobacterium</taxon>
        <taxon>Mycobacterium tuberculosis complex</taxon>
    </lineage>
</organism>
<feature type="chain" id="PRO_0000172536" description="Uncharacterized NTE family protein Rv2565">
    <location>
        <begin position="1"/>
        <end position="583"/>
    </location>
</feature>
<feature type="domain" description="PNPLA" evidence="1">
    <location>
        <begin position="309"/>
        <end position="469"/>
    </location>
</feature>
<feature type="short sequence motif" description="GXGXXG" evidence="1">
    <location>
        <begin position="313"/>
        <end position="318"/>
    </location>
</feature>
<feature type="short sequence motif" description="GXSXG" evidence="1">
    <location>
        <begin position="340"/>
        <end position="344"/>
    </location>
</feature>
<feature type="short sequence motif" description="DGA/G" evidence="1">
    <location>
        <begin position="456"/>
        <end position="458"/>
    </location>
</feature>
<feature type="active site" description="Nucleophile" evidence="1">
    <location>
        <position position="342"/>
    </location>
</feature>
<feature type="active site" description="Proton acceptor" evidence="1">
    <location>
        <position position="456"/>
    </location>
</feature>
<feature type="binding site">
    <location>
        <begin position="24"/>
        <end position="140"/>
    </location>
    <ligand>
        <name>a nucleoside 3',5'-cyclic phosphate</name>
        <dbReference type="ChEBI" id="CHEBI:58464"/>
    </ligand>
</feature>
<dbReference type="EMBL" id="AL123456">
    <property type="protein sequence ID" value="CCP45361.1"/>
    <property type="molecule type" value="Genomic_DNA"/>
</dbReference>
<dbReference type="PIR" id="A70729">
    <property type="entry name" value="A70729"/>
</dbReference>
<dbReference type="RefSeq" id="NP_217081.1">
    <property type="nucleotide sequence ID" value="NC_000962.3"/>
</dbReference>
<dbReference type="RefSeq" id="WP_003901427.1">
    <property type="nucleotide sequence ID" value="NZ_NVQJ01000023.1"/>
</dbReference>
<dbReference type="SMR" id="P9WIY7"/>
<dbReference type="FunCoup" id="P9WIY7">
    <property type="interactions" value="1"/>
</dbReference>
<dbReference type="STRING" id="83332.Rv2565"/>
<dbReference type="PaxDb" id="83332-Rv2565"/>
<dbReference type="DNASU" id="887288"/>
<dbReference type="GeneID" id="887288"/>
<dbReference type="KEGG" id="mtu:Rv2565"/>
<dbReference type="KEGG" id="mtv:RVBD_2565"/>
<dbReference type="TubercuList" id="Rv2565"/>
<dbReference type="eggNOG" id="COG0664">
    <property type="taxonomic scope" value="Bacteria"/>
</dbReference>
<dbReference type="eggNOG" id="COG1752">
    <property type="taxonomic scope" value="Bacteria"/>
</dbReference>
<dbReference type="InParanoid" id="P9WIY7"/>
<dbReference type="OrthoDB" id="7375466at2"/>
<dbReference type="PhylomeDB" id="P9WIY7"/>
<dbReference type="Proteomes" id="UP000001584">
    <property type="component" value="Chromosome"/>
</dbReference>
<dbReference type="GO" id="GO:0005829">
    <property type="term" value="C:cytosol"/>
    <property type="evidence" value="ECO:0007005"/>
    <property type="project" value="MTBBASE"/>
</dbReference>
<dbReference type="GO" id="GO:0004622">
    <property type="term" value="F:lysophospholipase activity"/>
    <property type="evidence" value="ECO:0007669"/>
    <property type="project" value="InterPro"/>
</dbReference>
<dbReference type="GO" id="GO:0016042">
    <property type="term" value="P:lipid catabolic process"/>
    <property type="evidence" value="ECO:0007669"/>
    <property type="project" value="UniProtKB-KW"/>
</dbReference>
<dbReference type="GO" id="GO:0046470">
    <property type="term" value="P:phosphatidylcholine metabolic process"/>
    <property type="evidence" value="ECO:0007669"/>
    <property type="project" value="InterPro"/>
</dbReference>
<dbReference type="CDD" id="cd00038">
    <property type="entry name" value="CAP_ED"/>
    <property type="match status" value="1"/>
</dbReference>
<dbReference type="CDD" id="cd07205">
    <property type="entry name" value="Pat_PNPLA6_PNPLA7_NTE1_like"/>
    <property type="match status" value="1"/>
</dbReference>
<dbReference type="Gene3D" id="3.40.1090.10">
    <property type="entry name" value="Cytosolic phospholipase A2 catalytic domain"/>
    <property type="match status" value="2"/>
</dbReference>
<dbReference type="Gene3D" id="2.60.120.10">
    <property type="entry name" value="Jelly Rolls"/>
    <property type="match status" value="1"/>
</dbReference>
<dbReference type="InterPro" id="IPR016035">
    <property type="entry name" value="Acyl_Trfase/lysoPLipase"/>
</dbReference>
<dbReference type="InterPro" id="IPR000595">
    <property type="entry name" value="cNMP-bd_dom"/>
</dbReference>
<dbReference type="InterPro" id="IPR018490">
    <property type="entry name" value="cNMP-bd_dom_sf"/>
</dbReference>
<dbReference type="InterPro" id="IPR001423">
    <property type="entry name" value="LysoPLipase_patatin_CS"/>
</dbReference>
<dbReference type="InterPro" id="IPR050301">
    <property type="entry name" value="NTE"/>
</dbReference>
<dbReference type="InterPro" id="IPR002641">
    <property type="entry name" value="PNPLA_dom"/>
</dbReference>
<dbReference type="InterPro" id="IPR014710">
    <property type="entry name" value="RmlC-like_jellyroll"/>
</dbReference>
<dbReference type="PANTHER" id="PTHR14226:SF29">
    <property type="entry name" value="NEUROPATHY TARGET ESTERASE SWS"/>
    <property type="match status" value="1"/>
</dbReference>
<dbReference type="PANTHER" id="PTHR14226">
    <property type="entry name" value="NEUROPATHY TARGET ESTERASE/SWISS CHEESE D.MELANOGASTER"/>
    <property type="match status" value="1"/>
</dbReference>
<dbReference type="Pfam" id="PF00027">
    <property type="entry name" value="cNMP_binding"/>
    <property type="match status" value="1"/>
</dbReference>
<dbReference type="Pfam" id="PF01734">
    <property type="entry name" value="Patatin"/>
    <property type="match status" value="1"/>
</dbReference>
<dbReference type="SMART" id="SM00100">
    <property type="entry name" value="cNMP"/>
    <property type="match status" value="1"/>
</dbReference>
<dbReference type="SUPFAM" id="SSF51206">
    <property type="entry name" value="cAMP-binding domain-like"/>
    <property type="match status" value="1"/>
</dbReference>
<dbReference type="SUPFAM" id="SSF52151">
    <property type="entry name" value="FabD/lysophospholipase-like"/>
    <property type="match status" value="1"/>
</dbReference>
<dbReference type="PROSITE" id="PS50042">
    <property type="entry name" value="CNMP_BINDING_3"/>
    <property type="match status" value="1"/>
</dbReference>
<dbReference type="PROSITE" id="PS51635">
    <property type="entry name" value="PNPLA"/>
    <property type="match status" value="1"/>
</dbReference>
<dbReference type="PROSITE" id="PS01237">
    <property type="entry name" value="UPF0028"/>
    <property type="match status" value="1"/>
</dbReference>
<gene>
    <name type="ordered locus">Rv2565</name>
    <name type="ORF">MTCY9C4.03c</name>
</gene>